<name>PCS_RHILO</name>
<evidence type="ECO:0000250" key="1"/>
<evidence type="ECO:0000255" key="2"/>
<evidence type="ECO:0000269" key="3">
    <source>
    </source>
</evidence>
<evidence type="ECO:0000305" key="4"/>
<comment type="function">
    <text evidence="3">Condenses choline with CDP-diglyceride to produce phosphatidylcholine and CMP.</text>
</comment>
<comment type="catalytic activity">
    <reaction evidence="3">
        <text>a CDP-1,2-diacyl-sn-glycerol + choline = a 1,2-diacyl-sn-glycero-3-phosphocholine + CMP + H(+)</text>
        <dbReference type="Rhea" id="RHEA:14597"/>
        <dbReference type="ChEBI" id="CHEBI:15354"/>
        <dbReference type="ChEBI" id="CHEBI:15378"/>
        <dbReference type="ChEBI" id="CHEBI:57643"/>
        <dbReference type="ChEBI" id="CHEBI:58332"/>
        <dbReference type="ChEBI" id="CHEBI:60377"/>
        <dbReference type="EC" id="2.7.8.24"/>
    </reaction>
</comment>
<comment type="cofactor">
    <cofactor evidence="1">
        <name>Mn(2+)</name>
        <dbReference type="ChEBI" id="CHEBI:29035"/>
    </cofactor>
</comment>
<comment type="subcellular location">
    <subcellularLocation>
        <location evidence="1">Cell inner membrane</location>
        <topology evidence="1">Multi-pass membrane protein</topology>
    </subcellularLocation>
</comment>
<comment type="similarity">
    <text evidence="4">Belongs to the CDP-alcohol phosphatidyltransferase class-I family.</text>
</comment>
<gene>
    <name type="primary">pcs</name>
    <name type="ordered locus">mll0506</name>
</gene>
<feature type="chain" id="PRO_0000056811" description="Phosphatidylcholine synthase">
    <location>
        <begin position="1"/>
        <end position="268"/>
    </location>
</feature>
<feature type="topological domain" description="Cytoplasmic" evidence="1">
    <location>
        <begin position="1"/>
        <end position="27"/>
    </location>
</feature>
<feature type="transmembrane region" description="Helical; Name=1" evidence="2">
    <location>
        <begin position="28"/>
        <end position="48"/>
    </location>
</feature>
<feature type="topological domain" description="Periplasmic" evidence="2">
    <location>
        <begin position="49"/>
        <end position="53"/>
    </location>
</feature>
<feature type="transmembrane region" description="Helical; Name=2" evidence="2">
    <location>
        <begin position="54"/>
        <end position="74"/>
    </location>
</feature>
<feature type="topological domain" description="Cytoplasmic" evidence="2">
    <location>
        <begin position="75"/>
        <end position="88"/>
    </location>
</feature>
<feature type="transmembrane region" description="Helical; Name=3" evidence="2">
    <location>
        <begin position="89"/>
        <end position="109"/>
    </location>
</feature>
<feature type="topological domain" description="Periplasmic" evidence="2">
    <location>
        <begin position="110"/>
        <end position="112"/>
    </location>
</feature>
<feature type="transmembrane region" description="Helical; Name=4" evidence="2">
    <location>
        <begin position="113"/>
        <end position="133"/>
    </location>
</feature>
<feature type="topological domain" description="Cytoplasmic" evidence="2">
    <location>
        <begin position="134"/>
        <end position="145"/>
    </location>
</feature>
<feature type="transmembrane region" description="Helical; Name=5" evidence="2">
    <location>
        <begin position="146"/>
        <end position="166"/>
    </location>
</feature>
<feature type="topological domain" description="Periplasmic" evidence="2">
    <location>
        <begin position="167"/>
        <end position="168"/>
    </location>
</feature>
<feature type="transmembrane region" description="Helical; Name=6" evidence="2">
    <location>
        <begin position="169"/>
        <end position="189"/>
    </location>
</feature>
<feature type="topological domain" description="Cytoplasmic" evidence="2">
    <location>
        <begin position="190"/>
        <end position="203"/>
    </location>
</feature>
<feature type="transmembrane region" description="Helical; Name=7" evidence="2">
    <location>
        <begin position="204"/>
        <end position="224"/>
    </location>
</feature>
<feature type="topological domain" description="Periplasmic" evidence="2">
    <location>
        <begin position="225"/>
        <end position="240"/>
    </location>
</feature>
<feature type="transmembrane region" description="Helical; Name=8" evidence="2">
    <location>
        <begin position="241"/>
        <end position="261"/>
    </location>
</feature>
<feature type="topological domain" description="Cytoplasmic" evidence="1">
    <location>
        <begin position="262"/>
        <end position="268"/>
    </location>
</feature>
<dbReference type="EC" id="2.7.8.24"/>
<dbReference type="EMBL" id="BA000012">
    <property type="protein sequence ID" value="BAB48080.1"/>
    <property type="molecule type" value="Genomic_DNA"/>
</dbReference>
<dbReference type="SMR" id="Q98MN3"/>
<dbReference type="KEGG" id="mlo:mll0506"/>
<dbReference type="eggNOG" id="COG1183">
    <property type="taxonomic scope" value="Bacteria"/>
</dbReference>
<dbReference type="HOGENOM" id="CLU_086279_0_0_5"/>
<dbReference type="Proteomes" id="UP000000552">
    <property type="component" value="Chromosome"/>
</dbReference>
<dbReference type="GO" id="GO:0005886">
    <property type="term" value="C:plasma membrane"/>
    <property type="evidence" value="ECO:0007669"/>
    <property type="project" value="UniProtKB-SubCell"/>
</dbReference>
<dbReference type="GO" id="GO:0050520">
    <property type="term" value="F:phosphatidylcholine synthase activity"/>
    <property type="evidence" value="ECO:0007669"/>
    <property type="project" value="UniProtKB-EC"/>
</dbReference>
<dbReference type="GO" id="GO:0008654">
    <property type="term" value="P:phospholipid biosynthetic process"/>
    <property type="evidence" value="ECO:0007669"/>
    <property type="project" value="UniProtKB-KW"/>
</dbReference>
<dbReference type="FunFam" id="1.20.120.1760:FF:000009">
    <property type="entry name" value="Phosphatidylcholine synthase"/>
    <property type="match status" value="1"/>
</dbReference>
<dbReference type="Gene3D" id="1.20.120.1760">
    <property type="match status" value="1"/>
</dbReference>
<dbReference type="InterPro" id="IPR000462">
    <property type="entry name" value="CDP-OH_P_trans"/>
</dbReference>
<dbReference type="InterPro" id="IPR043130">
    <property type="entry name" value="CDP-OH_PTrfase_TM_dom"/>
</dbReference>
<dbReference type="InterPro" id="IPR026027">
    <property type="entry name" value="PcS"/>
</dbReference>
<dbReference type="NCBIfam" id="NF045884">
    <property type="entry name" value="PhCholSynAgro"/>
    <property type="match status" value="1"/>
</dbReference>
<dbReference type="Pfam" id="PF01066">
    <property type="entry name" value="CDP-OH_P_transf"/>
    <property type="match status" value="1"/>
</dbReference>
<dbReference type="PIRSF" id="PIRSF000851">
    <property type="entry name" value="PcS"/>
    <property type="match status" value="1"/>
</dbReference>
<sequence length="268" mass="29526">MAARKAAKKLTDRIPRPKKKVTWPQARAFSVHLLTASGSFLAFLSLVAASEERWTAMFWWLGLALFVDGIDGPIARKLEVKEILPTWSGELLDNIIDYVTYVLIPAFALYQRGFMGEGLSFLSAAIIVVSSAIYYADTGMKTKENFFKGFPVVWNMVVFTLFVIEPGQWVSFAVVVVAGILTFVPINFIHPVRVVRLRPFNLTMTLLWCAFGALALAQAALAAFYDQIGVLGAQVSTFIKIGITITGLYLACIGGIMQFFPNLGAKKA</sequence>
<reference key="1">
    <citation type="journal article" date="2000" name="DNA Res.">
        <title>Complete genome structure of the nitrogen-fixing symbiotic bacterium Mesorhizobium loti.</title>
        <authorList>
            <person name="Kaneko T."/>
            <person name="Nakamura Y."/>
            <person name="Sato S."/>
            <person name="Asamizu E."/>
            <person name="Kato T."/>
            <person name="Sasamoto S."/>
            <person name="Watanabe A."/>
            <person name="Idesawa K."/>
            <person name="Ishikawa A."/>
            <person name="Kawashima K."/>
            <person name="Kimura T."/>
            <person name="Kishida Y."/>
            <person name="Kiyokawa C."/>
            <person name="Kohara M."/>
            <person name="Matsumoto M."/>
            <person name="Matsuno A."/>
            <person name="Mochizuki Y."/>
            <person name="Nakayama S."/>
            <person name="Nakazaki N."/>
            <person name="Shimpo S."/>
            <person name="Sugimoto M."/>
            <person name="Takeuchi C."/>
            <person name="Yamada M."/>
            <person name="Tabata S."/>
        </authorList>
    </citation>
    <scope>NUCLEOTIDE SEQUENCE [LARGE SCALE GENOMIC DNA]</scope>
    <source>
        <strain>LMG 29417 / CECT 9101 / MAFF 303099</strain>
    </source>
</reference>
<reference key="2">
    <citation type="journal article" date="2003" name="Microbiology">
        <title>Pathways for phosphatidylcholine biosynthesis in bacteria.</title>
        <authorList>
            <person name="Martinez-Morales F."/>
            <person name="Schobert M."/>
            <person name="Lopez-Lara I.M."/>
            <person name="Geiger O."/>
        </authorList>
    </citation>
    <scope>FUNCTION</scope>
    <scope>CATALYTIC ACTIVITY</scope>
    <source>
        <strain>LMG 29417 / CECT 9101 / MAFF 303099</strain>
    </source>
</reference>
<proteinExistence type="evidence at protein level"/>
<keyword id="KW-0997">Cell inner membrane</keyword>
<keyword id="KW-1003">Cell membrane</keyword>
<keyword id="KW-0444">Lipid biosynthesis</keyword>
<keyword id="KW-0443">Lipid metabolism</keyword>
<keyword id="KW-0464">Manganese</keyword>
<keyword id="KW-0472">Membrane</keyword>
<keyword id="KW-0594">Phospholipid biosynthesis</keyword>
<keyword id="KW-1208">Phospholipid metabolism</keyword>
<keyword id="KW-0808">Transferase</keyword>
<keyword id="KW-0812">Transmembrane</keyword>
<keyword id="KW-1133">Transmembrane helix</keyword>
<protein>
    <recommendedName>
        <fullName>Phosphatidylcholine synthase</fullName>
        <shortName>PC synthase</shortName>
        <shortName>PCS</shortName>
        <ecNumber>2.7.8.24</ecNumber>
    </recommendedName>
    <alternativeName>
        <fullName>CDP-diglyceride-choline O-phosphatidyltransferase</fullName>
    </alternativeName>
</protein>
<accession>Q98MN3</accession>
<organism>
    <name type="scientific">Mesorhizobium japonicum (strain LMG 29417 / CECT 9101 / MAFF 303099)</name>
    <name type="common">Mesorhizobium loti (strain MAFF 303099)</name>
    <dbReference type="NCBI Taxonomy" id="266835"/>
    <lineage>
        <taxon>Bacteria</taxon>
        <taxon>Pseudomonadati</taxon>
        <taxon>Pseudomonadota</taxon>
        <taxon>Alphaproteobacteria</taxon>
        <taxon>Hyphomicrobiales</taxon>
        <taxon>Phyllobacteriaceae</taxon>
        <taxon>Mesorhizobium</taxon>
    </lineage>
</organism>